<gene>
    <name evidence="1" type="primary">tatA</name>
    <name type="ordered locus">PHZ_c1963</name>
</gene>
<sequence>MGSFSIWHWLIVLVVVALLFGGRGRLSGIMGDAAKGIRAFRDGLKGESEQAEDETAKPLPKERDKDSARG</sequence>
<reference key="1">
    <citation type="journal article" date="2008" name="BMC Genomics">
        <title>Complete genome of Phenylobacterium zucineum - a novel facultative intracellular bacterium isolated from human erythroleukemia cell line K562.</title>
        <authorList>
            <person name="Luo Y."/>
            <person name="Xu X."/>
            <person name="Ding Z."/>
            <person name="Liu Z."/>
            <person name="Zhang B."/>
            <person name="Yan Z."/>
            <person name="Sun J."/>
            <person name="Hu S."/>
            <person name="Hu X."/>
        </authorList>
    </citation>
    <scope>NUCLEOTIDE SEQUENCE [LARGE SCALE GENOMIC DNA]</scope>
    <source>
        <strain>HLK1</strain>
    </source>
</reference>
<proteinExistence type="inferred from homology"/>
<comment type="function">
    <text evidence="1">Part of the twin-arginine translocation (Tat) system that transports large folded proteins containing a characteristic twin-arginine motif in their signal peptide across membranes. TatA could form the protein-conducting channel of the Tat system.</text>
</comment>
<comment type="subunit">
    <text evidence="1">The Tat system comprises two distinct complexes: a TatABC complex, containing multiple copies of TatA, TatB and TatC subunits, and a separate TatA complex, containing only TatA subunits. Substrates initially bind to the TatABC complex, which probably triggers association of the separate TatA complex to form the active translocon.</text>
</comment>
<comment type="subcellular location">
    <subcellularLocation>
        <location evidence="1">Cell inner membrane</location>
        <topology evidence="1">Single-pass membrane protein</topology>
    </subcellularLocation>
</comment>
<comment type="similarity">
    <text evidence="1">Belongs to the TatA/E family.</text>
</comment>
<name>TATA_PHEZH</name>
<dbReference type="EMBL" id="CP000747">
    <property type="protein sequence ID" value="ACG78374.1"/>
    <property type="molecule type" value="Genomic_DNA"/>
</dbReference>
<dbReference type="RefSeq" id="WP_012522516.1">
    <property type="nucleotide sequence ID" value="NC_011144.1"/>
</dbReference>
<dbReference type="SMR" id="B4RDI4"/>
<dbReference type="STRING" id="450851.PHZ_c1963"/>
<dbReference type="KEGG" id="pzu:PHZ_c1963"/>
<dbReference type="eggNOG" id="COG1826">
    <property type="taxonomic scope" value="Bacteria"/>
</dbReference>
<dbReference type="HOGENOM" id="CLU_086034_5_0_5"/>
<dbReference type="OrthoDB" id="7161179at2"/>
<dbReference type="Proteomes" id="UP000001868">
    <property type="component" value="Chromosome"/>
</dbReference>
<dbReference type="GO" id="GO:0033281">
    <property type="term" value="C:TAT protein transport complex"/>
    <property type="evidence" value="ECO:0007669"/>
    <property type="project" value="UniProtKB-UniRule"/>
</dbReference>
<dbReference type="GO" id="GO:0008320">
    <property type="term" value="F:protein transmembrane transporter activity"/>
    <property type="evidence" value="ECO:0007669"/>
    <property type="project" value="UniProtKB-UniRule"/>
</dbReference>
<dbReference type="GO" id="GO:0043953">
    <property type="term" value="P:protein transport by the Tat complex"/>
    <property type="evidence" value="ECO:0007669"/>
    <property type="project" value="UniProtKB-UniRule"/>
</dbReference>
<dbReference type="Gene3D" id="1.20.5.3310">
    <property type="match status" value="1"/>
</dbReference>
<dbReference type="HAMAP" id="MF_00236">
    <property type="entry name" value="TatA_E"/>
    <property type="match status" value="1"/>
</dbReference>
<dbReference type="InterPro" id="IPR003369">
    <property type="entry name" value="TatA/B/E"/>
</dbReference>
<dbReference type="InterPro" id="IPR006312">
    <property type="entry name" value="TatA/E"/>
</dbReference>
<dbReference type="NCBIfam" id="NF001940">
    <property type="entry name" value="PRK00720.1"/>
    <property type="match status" value="1"/>
</dbReference>
<dbReference type="NCBIfam" id="TIGR01411">
    <property type="entry name" value="tatAE"/>
    <property type="match status" value="1"/>
</dbReference>
<dbReference type="PANTHER" id="PTHR42982">
    <property type="entry name" value="SEC-INDEPENDENT PROTEIN TRANSLOCASE PROTEIN TATA"/>
    <property type="match status" value="1"/>
</dbReference>
<dbReference type="PANTHER" id="PTHR42982:SF1">
    <property type="entry name" value="SEC-INDEPENDENT PROTEIN TRANSLOCASE PROTEIN TATA"/>
    <property type="match status" value="1"/>
</dbReference>
<dbReference type="Pfam" id="PF02416">
    <property type="entry name" value="TatA_B_E"/>
    <property type="match status" value="1"/>
</dbReference>
<evidence type="ECO:0000255" key="1">
    <source>
        <dbReference type="HAMAP-Rule" id="MF_00236"/>
    </source>
</evidence>
<evidence type="ECO:0000256" key="2">
    <source>
        <dbReference type="SAM" id="MobiDB-lite"/>
    </source>
</evidence>
<protein>
    <recommendedName>
        <fullName evidence="1">Sec-independent protein translocase protein TatA</fullName>
    </recommendedName>
</protein>
<feature type="chain" id="PRO_1000197891" description="Sec-independent protein translocase protein TatA">
    <location>
        <begin position="1"/>
        <end position="70"/>
    </location>
</feature>
<feature type="transmembrane region" description="Helical" evidence="1">
    <location>
        <begin position="1"/>
        <end position="21"/>
    </location>
</feature>
<feature type="region of interest" description="Disordered" evidence="2">
    <location>
        <begin position="45"/>
        <end position="70"/>
    </location>
</feature>
<organism>
    <name type="scientific">Phenylobacterium zucineum (strain HLK1)</name>
    <dbReference type="NCBI Taxonomy" id="450851"/>
    <lineage>
        <taxon>Bacteria</taxon>
        <taxon>Pseudomonadati</taxon>
        <taxon>Pseudomonadota</taxon>
        <taxon>Alphaproteobacteria</taxon>
        <taxon>Caulobacterales</taxon>
        <taxon>Caulobacteraceae</taxon>
        <taxon>Phenylobacterium</taxon>
    </lineage>
</organism>
<keyword id="KW-0997">Cell inner membrane</keyword>
<keyword id="KW-1003">Cell membrane</keyword>
<keyword id="KW-0472">Membrane</keyword>
<keyword id="KW-0653">Protein transport</keyword>
<keyword id="KW-1185">Reference proteome</keyword>
<keyword id="KW-0811">Translocation</keyword>
<keyword id="KW-0812">Transmembrane</keyword>
<keyword id="KW-1133">Transmembrane helix</keyword>
<keyword id="KW-0813">Transport</keyword>
<accession>B4RDI4</accession>